<accession>Q9UX24</accession>
<comment type="function">
    <text evidence="1">Part of the phosphoribosylformylglycinamidine synthase complex involved in the purines biosynthetic pathway. Catalyzes the ATP-dependent conversion of formylglycinamide ribonucleotide (FGAR) and glutamine to yield formylglycinamidine ribonucleotide (FGAM) and glutamate. The FGAM synthase complex is composed of three subunits. PurQ produces an ammonia molecule by converting glutamine to glutamate. PurL transfers the ammonia molecule to FGAR to form FGAM in an ATP-dependent manner. PurS interacts with PurQ and PurL and is thought to assist in the transfer of the ammonia molecule from PurQ to PurL.</text>
</comment>
<comment type="catalytic activity">
    <reaction evidence="1">
        <text>N(2)-formyl-N(1)-(5-phospho-beta-D-ribosyl)glycinamide + L-glutamine + ATP + H2O = 2-formamido-N(1)-(5-O-phospho-beta-D-ribosyl)acetamidine + L-glutamate + ADP + phosphate + H(+)</text>
        <dbReference type="Rhea" id="RHEA:17129"/>
        <dbReference type="ChEBI" id="CHEBI:15377"/>
        <dbReference type="ChEBI" id="CHEBI:15378"/>
        <dbReference type="ChEBI" id="CHEBI:29985"/>
        <dbReference type="ChEBI" id="CHEBI:30616"/>
        <dbReference type="ChEBI" id="CHEBI:43474"/>
        <dbReference type="ChEBI" id="CHEBI:58359"/>
        <dbReference type="ChEBI" id="CHEBI:147286"/>
        <dbReference type="ChEBI" id="CHEBI:147287"/>
        <dbReference type="ChEBI" id="CHEBI:456216"/>
        <dbReference type="EC" id="6.3.5.3"/>
    </reaction>
</comment>
<comment type="pathway">
    <text evidence="1">Purine metabolism; IMP biosynthesis via de novo pathway; 5-amino-1-(5-phospho-D-ribosyl)imidazole from N(2)-formyl-N(1)-(5-phospho-D-ribosyl)glycinamide: step 1/2.</text>
</comment>
<comment type="subunit">
    <text evidence="1">Monomer. Part of the FGAM synthase complex composed of 1 PurL, 1 PurQ and 2 PurS subunits.</text>
</comment>
<comment type="subcellular location">
    <subcellularLocation>
        <location evidence="1">Cytoplasm</location>
    </subcellularLocation>
</comment>
<comment type="similarity">
    <text evidence="1">Belongs to the FGAMS family.</text>
</comment>
<proteinExistence type="inferred from homology"/>
<evidence type="ECO:0000255" key="1">
    <source>
        <dbReference type="HAMAP-Rule" id="MF_00420"/>
    </source>
</evidence>
<reference key="1">
    <citation type="journal article" date="2000" name="Genome">
        <title>Gene content and organization of a 281-kbp contig from the genome of the extremely thermophilic archaeon, Sulfolobus solfataricus P2.</title>
        <authorList>
            <person name="Charlebois R.L."/>
            <person name="Singh R.K."/>
            <person name="Chan-Weiher C.C.-Y."/>
            <person name="Allard G."/>
            <person name="Chow C."/>
            <person name="Confalonieri F."/>
            <person name="Curtis B."/>
            <person name="Duguet M."/>
            <person name="Erauso G."/>
            <person name="Faguy D."/>
            <person name="Gaasterland T."/>
            <person name="Garrett R.A."/>
            <person name="Gordon P."/>
            <person name="Jeffries A.C."/>
            <person name="Kozera C."/>
            <person name="Kushwaha N."/>
            <person name="Lafleur E."/>
            <person name="Medina N."/>
            <person name="Peng X."/>
            <person name="Penny S.L."/>
            <person name="She Q."/>
            <person name="St Jean A."/>
            <person name="van der Oost J."/>
            <person name="Young F."/>
            <person name="Zivanovic Y."/>
            <person name="Doolittle W.F."/>
            <person name="Ragan M.A."/>
            <person name="Sensen C.W."/>
        </authorList>
    </citation>
    <scope>NUCLEOTIDE SEQUENCE [LARGE SCALE GENOMIC DNA]</scope>
    <source>
        <strain>ATCC 35092 / DSM 1617 / JCM 11322 / P2</strain>
    </source>
</reference>
<reference key="2">
    <citation type="journal article" date="2001" name="Proc. Natl. Acad. Sci. U.S.A.">
        <title>The complete genome of the crenarchaeon Sulfolobus solfataricus P2.</title>
        <authorList>
            <person name="She Q."/>
            <person name="Singh R.K."/>
            <person name="Confalonieri F."/>
            <person name="Zivanovic Y."/>
            <person name="Allard G."/>
            <person name="Awayez M.J."/>
            <person name="Chan-Weiher C.C.-Y."/>
            <person name="Clausen I.G."/>
            <person name="Curtis B.A."/>
            <person name="De Moors A."/>
            <person name="Erauso G."/>
            <person name="Fletcher C."/>
            <person name="Gordon P.M.K."/>
            <person name="Heikamp-de Jong I."/>
            <person name="Jeffries A.C."/>
            <person name="Kozera C.J."/>
            <person name="Medina N."/>
            <person name="Peng X."/>
            <person name="Thi-Ngoc H.P."/>
            <person name="Redder P."/>
            <person name="Schenk M.E."/>
            <person name="Theriault C."/>
            <person name="Tolstrup N."/>
            <person name="Charlebois R.L."/>
            <person name="Doolittle W.F."/>
            <person name="Duguet M."/>
            <person name="Gaasterland T."/>
            <person name="Garrett R.A."/>
            <person name="Ragan M.A."/>
            <person name="Sensen C.W."/>
            <person name="Van der Oost J."/>
        </authorList>
    </citation>
    <scope>NUCLEOTIDE SEQUENCE [LARGE SCALE GENOMIC DNA]</scope>
    <source>
        <strain>ATCC 35092 / DSM 1617 / JCM 11322 / P2</strain>
    </source>
</reference>
<protein>
    <recommendedName>
        <fullName evidence="1">Phosphoribosylformylglycinamidine synthase subunit PurL</fullName>
        <shortName evidence="1">FGAM synthase</shortName>
        <ecNumber evidence="1">6.3.5.3</ecNumber>
    </recommendedName>
    <alternativeName>
        <fullName evidence="1">Formylglycinamide ribonucleotide amidotransferase subunit II</fullName>
        <shortName evidence="1">FGAR amidotransferase II</shortName>
        <shortName evidence="1">FGAR-AT II</shortName>
    </alternativeName>
    <alternativeName>
        <fullName evidence="1">Glutamine amidotransferase PurL</fullName>
    </alternativeName>
    <alternativeName>
        <fullName evidence="1">Phosphoribosylformylglycinamidine synthase subunit II</fullName>
    </alternativeName>
</protein>
<dbReference type="EC" id="6.3.5.3" evidence="1"/>
<dbReference type="EMBL" id="Y18930">
    <property type="protein sequence ID" value="CAB57670.1"/>
    <property type="molecule type" value="Genomic_DNA"/>
</dbReference>
<dbReference type="EMBL" id="AE006641">
    <property type="protein sequence ID" value="AAK40940.1"/>
    <property type="molecule type" value="Genomic_DNA"/>
</dbReference>
<dbReference type="PIR" id="E90210">
    <property type="entry name" value="E90210"/>
</dbReference>
<dbReference type="RefSeq" id="WP_009991165.1">
    <property type="nucleotide sequence ID" value="NC_002754.1"/>
</dbReference>
<dbReference type="SMR" id="Q9UX24"/>
<dbReference type="FunCoup" id="Q9UX24">
    <property type="interactions" value="176"/>
</dbReference>
<dbReference type="STRING" id="273057.SSO0629"/>
<dbReference type="PaxDb" id="273057-SSO0629"/>
<dbReference type="EnsemblBacteria" id="AAK40940">
    <property type="protein sequence ID" value="AAK40940"/>
    <property type="gene ID" value="SSO0629"/>
</dbReference>
<dbReference type="GeneID" id="44129631"/>
<dbReference type="KEGG" id="sso:SSO0629"/>
<dbReference type="PATRIC" id="fig|273057.12.peg.636"/>
<dbReference type="eggNOG" id="arCOG00641">
    <property type="taxonomic scope" value="Archaea"/>
</dbReference>
<dbReference type="HOGENOM" id="CLU_003100_0_1_2"/>
<dbReference type="InParanoid" id="Q9UX24"/>
<dbReference type="PhylomeDB" id="Q9UX24"/>
<dbReference type="UniPathway" id="UPA00074">
    <property type="reaction ID" value="UER00128"/>
</dbReference>
<dbReference type="Proteomes" id="UP000001974">
    <property type="component" value="Chromosome"/>
</dbReference>
<dbReference type="GO" id="GO:0005737">
    <property type="term" value="C:cytoplasm"/>
    <property type="evidence" value="ECO:0007669"/>
    <property type="project" value="UniProtKB-SubCell"/>
</dbReference>
<dbReference type="GO" id="GO:0005524">
    <property type="term" value="F:ATP binding"/>
    <property type="evidence" value="ECO:0007669"/>
    <property type="project" value="UniProtKB-UniRule"/>
</dbReference>
<dbReference type="GO" id="GO:0000287">
    <property type="term" value="F:magnesium ion binding"/>
    <property type="evidence" value="ECO:0007669"/>
    <property type="project" value="UniProtKB-UniRule"/>
</dbReference>
<dbReference type="GO" id="GO:0004642">
    <property type="term" value="F:phosphoribosylformylglycinamidine synthase activity"/>
    <property type="evidence" value="ECO:0000318"/>
    <property type="project" value="GO_Central"/>
</dbReference>
<dbReference type="GO" id="GO:0006189">
    <property type="term" value="P:'de novo' IMP biosynthetic process"/>
    <property type="evidence" value="ECO:0007669"/>
    <property type="project" value="UniProtKB-UniRule"/>
</dbReference>
<dbReference type="GO" id="GO:0006164">
    <property type="term" value="P:purine nucleotide biosynthetic process"/>
    <property type="evidence" value="ECO:0000318"/>
    <property type="project" value="GO_Central"/>
</dbReference>
<dbReference type="CDD" id="cd02203">
    <property type="entry name" value="PurL_repeat1"/>
    <property type="match status" value="1"/>
</dbReference>
<dbReference type="CDD" id="cd02204">
    <property type="entry name" value="PurL_repeat2"/>
    <property type="match status" value="1"/>
</dbReference>
<dbReference type="Gene3D" id="3.90.650.10">
    <property type="entry name" value="PurM-like C-terminal domain"/>
    <property type="match status" value="2"/>
</dbReference>
<dbReference type="Gene3D" id="3.30.1330.10">
    <property type="entry name" value="PurM-like, N-terminal domain"/>
    <property type="match status" value="2"/>
</dbReference>
<dbReference type="HAMAP" id="MF_00420">
    <property type="entry name" value="PurL_2"/>
    <property type="match status" value="1"/>
</dbReference>
<dbReference type="InterPro" id="IPR010074">
    <property type="entry name" value="PRibForGlyAmidine_synth_PurL"/>
</dbReference>
<dbReference type="InterPro" id="IPR041609">
    <property type="entry name" value="PurL_linker"/>
</dbReference>
<dbReference type="InterPro" id="IPR010918">
    <property type="entry name" value="PurM-like_C_dom"/>
</dbReference>
<dbReference type="InterPro" id="IPR036676">
    <property type="entry name" value="PurM-like_C_sf"/>
</dbReference>
<dbReference type="InterPro" id="IPR016188">
    <property type="entry name" value="PurM-like_N"/>
</dbReference>
<dbReference type="InterPro" id="IPR036921">
    <property type="entry name" value="PurM-like_N_sf"/>
</dbReference>
<dbReference type="NCBIfam" id="TIGR01736">
    <property type="entry name" value="FGAM_synth_II"/>
    <property type="match status" value="1"/>
</dbReference>
<dbReference type="NCBIfam" id="NF002290">
    <property type="entry name" value="PRK01213.1"/>
    <property type="match status" value="1"/>
</dbReference>
<dbReference type="PANTHER" id="PTHR43555">
    <property type="entry name" value="PHOSPHORIBOSYLFORMYLGLYCINAMIDINE SYNTHASE SUBUNIT PURL"/>
    <property type="match status" value="1"/>
</dbReference>
<dbReference type="PANTHER" id="PTHR43555:SF1">
    <property type="entry name" value="PHOSPHORIBOSYLFORMYLGLYCINAMIDINE SYNTHASE SUBUNIT PURL"/>
    <property type="match status" value="1"/>
</dbReference>
<dbReference type="Pfam" id="PF00586">
    <property type="entry name" value="AIRS"/>
    <property type="match status" value="2"/>
</dbReference>
<dbReference type="Pfam" id="PF02769">
    <property type="entry name" value="AIRS_C"/>
    <property type="match status" value="2"/>
</dbReference>
<dbReference type="Pfam" id="PF18072">
    <property type="entry name" value="FGAR-AT_linker"/>
    <property type="match status" value="1"/>
</dbReference>
<dbReference type="PIRSF" id="PIRSF001587">
    <property type="entry name" value="FGAM_synthase_II"/>
    <property type="match status" value="1"/>
</dbReference>
<dbReference type="SUPFAM" id="SSF56042">
    <property type="entry name" value="PurM C-terminal domain-like"/>
    <property type="match status" value="2"/>
</dbReference>
<dbReference type="SUPFAM" id="SSF55326">
    <property type="entry name" value="PurM N-terminal domain-like"/>
    <property type="match status" value="2"/>
</dbReference>
<keyword id="KW-0067">ATP-binding</keyword>
<keyword id="KW-0963">Cytoplasm</keyword>
<keyword id="KW-0436">Ligase</keyword>
<keyword id="KW-0460">Magnesium</keyword>
<keyword id="KW-0479">Metal-binding</keyword>
<keyword id="KW-0547">Nucleotide-binding</keyword>
<keyword id="KW-0658">Purine biosynthesis</keyword>
<keyword id="KW-1185">Reference proteome</keyword>
<sequence length="709" mass="77089">MGINLLPIEMDEIRKRLGREPNETEWRVIDAVWSEHCSYKSSKIFLKSFSIDSPNVIMGIKDWQDAGAVDIGDGWAVVIKVESHNHPSAIDPFNGAATGVGGIIRDIISKGAKPIALMDMIRVGNLKIKKNVWLLKNIIAGIAAYGNSIGVPVVGGELSFDDTYNDNPLVDVAAIGIVRKDKIKPSIVDKAGLKLVLAGLTGVDGLGGASFASRKLSGEDEIGAVQIADPFAGKIILDVTLEIADKVEAIKDLGGGGLAVAVTEITNGLGATVDIEKIPLRVKNMNPSDVIISETQERMLYAVEEKNVKEVCEAFEEYEYPCSVIGEITNEPVIKFRYIGKDLVSLPTNVLLNPPRFLWPIKNTKKNVEEKIVDLPLESAIYTVLTHPDLVSKGWAYSQFDYEVNTSTVVKPGDADSAVVSLPNGKLLAIKADANPDMCAEDGYECGKGIVAEAYRNLATVGARGMVAVDHLQFGDPKKAEVYYTFVEAIRGIGEATRFFNIPIVGGKVSFYNENNQGRPIKPTPLIVMAGLVQDKLLKNRVEDNLYVVSVGYTRKELGGSLLSKIFKIPSQAPKVRLQEDLLSSEVVIDSINEGKITFAKDVSRGGLAASLFSILVHGYGVEISTKSILSDTDNVIENLFSESSGRFIVLTNEPEWIVEKSKSKGIVASIIGRVNKKTNILTIDNIDYNLKNIVDNYFNFLEEVMGNG</sequence>
<feature type="chain" id="PRO_0000100525" description="Phosphoribosylformylglycinamidine synthase subunit PurL">
    <location>
        <begin position="1"/>
        <end position="709"/>
    </location>
</feature>
<feature type="active site" evidence="1">
    <location>
        <position position="36"/>
    </location>
</feature>
<feature type="active site" description="Proton acceptor" evidence="1">
    <location>
        <position position="84"/>
    </location>
</feature>
<feature type="binding site" evidence="1">
    <location>
        <position position="39"/>
    </location>
    <ligand>
        <name>ATP</name>
        <dbReference type="ChEBI" id="CHEBI:30616"/>
    </ligand>
</feature>
<feature type="binding site" evidence="1">
    <location>
        <position position="80"/>
    </location>
    <ligand>
        <name>ATP</name>
        <dbReference type="ChEBI" id="CHEBI:30616"/>
    </ligand>
</feature>
<feature type="binding site" evidence="1">
    <location>
        <position position="82"/>
    </location>
    <ligand>
        <name>Mg(2+)</name>
        <dbReference type="ChEBI" id="CHEBI:18420"/>
        <label>1</label>
    </ligand>
</feature>
<feature type="binding site" evidence="1">
    <location>
        <begin position="83"/>
        <end position="86"/>
    </location>
    <ligand>
        <name>substrate</name>
    </ligand>
</feature>
<feature type="binding site" evidence="1">
    <location>
        <position position="105"/>
    </location>
    <ligand>
        <name>substrate</name>
    </ligand>
</feature>
<feature type="binding site" evidence="1">
    <location>
        <position position="106"/>
    </location>
    <ligand>
        <name>Mg(2+)</name>
        <dbReference type="ChEBI" id="CHEBI:18420"/>
        <label>2</label>
    </ligand>
</feature>
<feature type="binding site" evidence="1">
    <location>
        <position position="226"/>
    </location>
    <ligand>
        <name>substrate</name>
    </ligand>
</feature>
<feature type="binding site" evidence="1">
    <location>
        <position position="252"/>
    </location>
    <ligand>
        <name>Mg(2+)</name>
        <dbReference type="ChEBI" id="CHEBI:18420"/>
        <label>2</label>
    </ligand>
</feature>
<feature type="binding site" evidence="1">
    <location>
        <begin position="294"/>
        <end position="296"/>
    </location>
    <ligand>
        <name>substrate</name>
    </ligand>
</feature>
<feature type="binding site" evidence="1">
    <location>
        <position position="470"/>
    </location>
    <ligand>
        <name>ATP</name>
        <dbReference type="ChEBI" id="CHEBI:30616"/>
    </ligand>
</feature>
<feature type="binding site" evidence="1">
    <location>
        <position position="507"/>
    </location>
    <ligand>
        <name>ATP</name>
        <dbReference type="ChEBI" id="CHEBI:30616"/>
    </ligand>
</feature>
<feature type="binding site" evidence="1">
    <location>
        <position position="510"/>
    </location>
    <ligand>
        <name>substrate</name>
    </ligand>
</feature>
<name>PURL_SACS2</name>
<gene>
    <name evidence="1" type="primary">purL</name>
    <name type="ordered locus">SSO0629</name>
    <name type="ORF">C08_019</name>
</gene>
<organism>
    <name type="scientific">Saccharolobus solfataricus (strain ATCC 35092 / DSM 1617 / JCM 11322 / P2)</name>
    <name type="common">Sulfolobus solfataricus</name>
    <dbReference type="NCBI Taxonomy" id="273057"/>
    <lineage>
        <taxon>Archaea</taxon>
        <taxon>Thermoproteota</taxon>
        <taxon>Thermoprotei</taxon>
        <taxon>Sulfolobales</taxon>
        <taxon>Sulfolobaceae</taxon>
        <taxon>Saccharolobus</taxon>
    </lineage>
</organism>